<gene>
    <name evidence="1" type="primary">smg</name>
    <name type="ordered locus">Sama_0046</name>
</gene>
<keyword id="KW-1185">Reference proteome</keyword>
<reference key="1">
    <citation type="submission" date="2006-12" db="EMBL/GenBank/DDBJ databases">
        <title>Complete sequence of Shewanella amazonensis SB2B.</title>
        <authorList>
            <consortium name="US DOE Joint Genome Institute"/>
            <person name="Copeland A."/>
            <person name="Lucas S."/>
            <person name="Lapidus A."/>
            <person name="Barry K."/>
            <person name="Detter J.C."/>
            <person name="Glavina del Rio T."/>
            <person name="Hammon N."/>
            <person name="Israni S."/>
            <person name="Dalin E."/>
            <person name="Tice H."/>
            <person name="Pitluck S."/>
            <person name="Munk A.C."/>
            <person name="Brettin T."/>
            <person name="Bruce D."/>
            <person name="Han C."/>
            <person name="Tapia R."/>
            <person name="Gilna P."/>
            <person name="Schmutz J."/>
            <person name="Larimer F."/>
            <person name="Land M."/>
            <person name="Hauser L."/>
            <person name="Kyrpides N."/>
            <person name="Mikhailova N."/>
            <person name="Fredrickson J."/>
            <person name="Richardson P."/>
        </authorList>
    </citation>
    <scope>NUCLEOTIDE SEQUENCE [LARGE SCALE GENOMIC DNA]</scope>
    <source>
        <strain>ATCC BAA-1098 / SB2B</strain>
    </source>
</reference>
<dbReference type="EMBL" id="CP000507">
    <property type="protein sequence ID" value="ABL98258.1"/>
    <property type="molecule type" value="Genomic_DNA"/>
</dbReference>
<dbReference type="RefSeq" id="WP_011758169.1">
    <property type="nucleotide sequence ID" value="NC_008700.1"/>
</dbReference>
<dbReference type="SMR" id="A1S1K2"/>
<dbReference type="STRING" id="326297.Sama_0046"/>
<dbReference type="KEGG" id="saz:Sama_0046"/>
<dbReference type="eggNOG" id="COG2922">
    <property type="taxonomic scope" value="Bacteria"/>
</dbReference>
<dbReference type="HOGENOM" id="CLU_133242_0_0_6"/>
<dbReference type="OrthoDB" id="9788984at2"/>
<dbReference type="Proteomes" id="UP000009175">
    <property type="component" value="Chromosome"/>
</dbReference>
<dbReference type="HAMAP" id="MF_00598">
    <property type="entry name" value="Smg"/>
    <property type="match status" value="1"/>
</dbReference>
<dbReference type="InterPro" id="IPR007456">
    <property type="entry name" value="Smg"/>
</dbReference>
<dbReference type="NCBIfam" id="NF002897">
    <property type="entry name" value="PRK03430.1"/>
    <property type="match status" value="1"/>
</dbReference>
<dbReference type="PANTHER" id="PTHR38692">
    <property type="entry name" value="PROTEIN SMG"/>
    <property type="match status" value="1"/>
</dbReference>
<dbReference type="PANTHER" id="PTHR38692:SF1">
    <property type="entry name" value="PROTEIN SMG"/>
    <property type="match status" value="1"/>
</dbReference>
<dbReference type="Pfam" id="PF04361">
    <property type="entry name" value="DUF494"/>
    <property type="match status" value="1"/>
</dbReference>
<comment type="similarity">
    <text evidence="1">Belongs to the Smg family.</text>
</comment>
<evidence type="ECO:0000255" key="1">
    <source>
        <dbReference type="HAMAP-Rule" id="MF_00598"/>
    </source>
</evidence>
<protein>
    <recommendedName>
        <fullName evidence="1">Protein Smg homolog</fullName>
    </recommendedName>
</protein>
<organism>
    <name type="scientific">Shewanella amazonensis (strain ATCC BAA-1098 / SB2B)</name>
    <dbReference type="NCBI Taxonomy" id="326297"/>
    <lineage>
        <taxon>Bacteria</taxon>
        <taxon>Pseudomonadati</taxon>
        <taxon>Pseudomonadota</taxon>
        <taxon>Gammaproteobacteria</taxon>
        <taxon>Alteromonadales</taxon>
        <taxon>Shewanellaceae</taxon>
        <taxon>Shewanella</taxon>
    </lineage>
</organism>
<proteinExistence type="inferred from homology"/>
<feature type="chain" id="PRO_1000025662" description="Protein Smg homolog">
    <location>
        <begin position="1"/>
        <end position="159"/>
    </location>
</feature>
<sequence>MFDILMYLFENYVQNDLEVDMLVDEDQLKKELALAGFRQTEIIKALNWLEHLADLRDSEQPYLCHHEQHSFRVYTPEEMERLDVECRGFLMFLEQIKVLNVEAREMVIDRVMDLDESSLTLDDLKWVIMMVLFNAPGQEMAYNQMENMMFDEQPGRLHS</sequence>
<accession>A1S1K2</accession>
<name>SMG_SHEAM</name>